<proteinExistence type="inferred from homology"/>
<geneLocation type="mitochondrion"/>
<gene>
    <name type="primary">mt-cyb</name>
    <name type="synonym">cob</name>
    <name type="synonym">cytb</name>
    <name type="synonym">mtcyb</name>
</gene>
<keyword id="KW-0249">Electron transport</keyword>
<keyword id="KW-0349">Heme</keyword>
<keyword id="KW-0408">Iron</keyword>
<keyword id="KW-0472">Membrane</keyword>
<keyword id="KW-0479">Metal-binding</keyword>
<keyword id="KW-0496">Mitochondrion</keyword>
<keyword id="KW-0999">Mitochondrion inner membrane</keyword>
<keyword id="KW-0679">Respiratory chain</keyword>
<keyword id="KW-0812">Transmembrane</keyword>
<keyword id="KW-1133">Transmembrane helix</keyword>
<keyword id="KW-0813">Transport</keyword>
<keyword id="KW-0830">Ubiquinone</keyword>
<organism>
    <name type="scientific">Julidochromis regani</name>
    <name type="common">Convict julie</name>
    <dbReference type="NCBI Taxonomy" id="8125"/>
    <lineage>
        <taxon>Eukaryota</taxon>
        <taxon>Metazoa</taxon>
        <taxon>Chordata</taxon>
        <taxon>Craniata</taxon>
        <taxon>Vertebrata</taxon>
        <taxon>Euteleostomi</taxon>
        <taxon>Actinopterygii</taxon>
        <taxon>Neopterygii</taxon>
        <taxon>Teleostei</taxon>
        <taxon>Neoteleostei</taxon>
        <taxon>Acanthomorphata</taxon>
        <taxon>Ovalentaria</taxon>
        <taxon>Cichlomorphae</taxon>
        <taxon>Cichliformes</taxon>
        <taxon>Cichlidae</taxon>
        <taxon>African cichlids</taxon>
        <taxon>Pseudocrenilabrinae</taxon>
        <taxon>Lamprologini</taxon>
        <taxon>Julidochromis</taxon>
    </lineage>
</organism>
<sequence>TALFLAMHYTSDIATAFSSVAHICRDVNYGWLIRNMHANGASFLFICIYLHIGRGLYYGSYLYKETWNIGVILLLLTMM</sequence>
<feature type="chain" id="PRO_0000061069" description="Cytochrome b">
    <location>
        <begin position="1" status="less than"/>
        <end position="79" status="greater than"/>
    </location>
</feature>
<feature type="transmembrane region" description="Helical" evidence="2">
    <location>
        <begin position="1" status="less than"/>
        <end position="7"/>
    </location>
</feature>
<feature type="transmembrane region" description="Helical" evidence="2">
    <location>
        <begin position="31"/>
        <end position="52"/>
    </location>
</feature>
<feature type="transmembrane region" description="Helical" evidence="2">
    <location>
        <begin position="67"/>
        <end position="79" status="greater than"/>
    </location>
</feature>
<feature type="binding site" description="axial binding residue" evidence="2">
    <location>
        <position position="37"/>
    </location>
    <ligand>
        <name>heme b</name>
        <dbReference type="ChEBI" id="CHEBI:60344"/>
        <label>b562</label>
    </ligand>
    <ligandPart>
        <name>Fe</name>
        <dbReference type="ChEBI" id="CHEBI:18248"/>
    </ligandPart>
</feature>
<feature type="binding site" description="axial binding residue" evidence="2">
    <location>
        <position position="51"/>
    </location>
    <ligand>
        <name>heme b</name>
        <dbReference type="ChEBI" id="CHEBI:60344"/>
        <label>b566</label>
    </ligand>
    <ligandPart>
        <name>Fe</name>
        <dbReference type="ChEBI" id="CHEBI:18248"/>
    </ligandPart>
</feature>
<feature type="non-terminal residue">
    <location>
        <position position="1"/>
    </location>
</feature>
<feature type="non-terminal residue">
    <location>
        <position position="79"/>
    </location>
</feature>
<accession>P16367</accession>
<name>CYB_JULRE</name>
<comment type="function">
    <text evidence="2">Component of the ubiquinol-cytochrome c reductase complex (complex III or cytochrome b-c1 complex) that is part of the mitochondrial respiratory chain. The b-c1 complex mediates electron transfer from ubiquinol to cytochrome c. Contributes to the generation of a proton gradient across the mitochondrial membrane that is then used for ATP synthesis.</text>
</comment>
<comment type="cofactor">
    <cofactor evidence="2">
        <name>heme b</name>
        <dbReference type="ChEBI" id="CHEBI:60344"/>
    </cofactor>
    <text evidence="2">Binds 2 heme b groups non-covalently.</text>
</comment>
<comment type="subunit">
    <text evidence="2">The cytochrome bc1 complex contains 3 respiratory subunits (MT-CYB, CYC1 and UQCRFS1), 2 core proteins (UQCRC1 and UQCRC2) and probably 6 low-molecular weight proteins.</text>
</comment>
<comment type="subcellular location">
    <subcellularLocation>
        <location evidence="2">Mitochondrion inner membrane</location>
        <topology evidence="2">Multi-pass membrane protein</topology>
    </subcellularLocation>
</comment>
<comment type="miscellaneous">
    <text evidence="1">Heme 1 (or BL or b562) is low-potential and absorbs at about 562 nm, and heme 2 (or BH or b566) is high-potential and absorbs at about 566 nm.</text>
</comment>
<comment type="similarity">
    <text evidence="3">Belongs to the cytochrome b family.</text>
</comment>
<comment type="caution">
    <text evidence="2">The full-length protein contains only eight transmembrane helices, not nine as predicted by bioinformatics tools.</text>
</comment>
<evidence type="ECO:0000250" key="1"/>
<evidence type="ECO:0000250" key="2">
    <source>
        <dbReference type="UniProtKB" id="P00157"/>
    </source>
</evidence>
<evidence type="ECO:0000255" key="3">
    <source>
        <dbReference type="PROSITE-ProRule" id="PRU00968"/>
    </source>
</evidence>
<dbReference type="EMBL" id="M25695">
    <property type="protein sequence ID" value="AAA31867.1"/>
    <property type="molecule type" value="Genomic_DNA"/>
</dbReference>
<dbReference type="PIR" id="F33286">
    <property type="entry name" value="F33286"/>
</dbReference>
<dbReference type="SMR" id="P16367"/>
<dbReference type="GO" id="GO:0005743">
    <property type="term" value="C:mitochondrial inner membrane"/>
    <property type="evidence" value="ECO:0007669"/>
    <property type="project" value="UniProtKB-SubCell"/>
</dbReference>
<dbReference type="GO" id="GO:0046872">
    <property type="term" value="F:metal ion binding"/>
    <property type="evidence" value="ECO:0007669"/>
    <property type="project" value="UniProtKB-KW"/>
</dbReference>
<dbReference type="GO" id="GO:0008121">
    <property type="term" value="F:ubiquinol-cytochrome-c reductase activity"/>
    <property type="evidence" value="ECO:0007669"/>
    <property type="project" value="TreeGrafter"/>
</dbReference>
<dbReference type="GO" id="GO:0006122">
    <property type="term" value="P:mitochondrial electron transport, ubiquinol to cytochrome c"/>
    <property type="evidence" value="ECO:0007669"/>
    <property type="project" value="TreeGrafter"/>
</dbReference>
<dbReference type="Gene3D" id="1.20.810.10">
    <property type="entry name" value="Cytochrome Bc1 Complex, Chain C"/>
    <property type="match status" value="1"/>
</dbReference>
<dbReference type="InterPro" id="IPR005797">
    <property type="entry name" value="Cyt_b/b6_N"/>
</dbReference>
<dbReference type="InterPro" id="IPR027387">
    <property type="entry name" value="Cytb/b6-like_sf"/>
</dbReference>
<dbReference type="InterPro" id="IPR016174">
    <property type="entry name" value="Di-haem_cyt_TM"/>
</dbReference>
<dbReference type="PANTHER" id="PTHR19271">
    <property type="entry name" value="CYTOCHROME B"/>
    <property type="match status" value="1"/>
</dbReference>
<dbReference type="PANTHER" id="PTHR19271:SF16">
    <property type="entry name" value="CYTOCHROME B"/>
    <property type="match status" value="1"/>
</dbReference>
<dbReference type="Pfam" id="PF00033">
    <property type="entry name" value="Cytochrome_B"/>
    <property type="match status" value="1"/>
</dbReference>
<dbReference type="SUPFAM" id="SSF81342">
    <property type="entry name" value="Transmembrane di-heme cytochromes"/>
    <property type="match status" value="1"/>
</dbReference>
<dbReference type="PROSITE" id="PS51002">
    <property type="entry name" value="CYTB_NTER"/>
    <property type="match status" value="1"/>
</dbReference>
<protein>
    <recommendedName>
        <fullName>Cytochrome b</fullName>
    </recommendedName>
    <alternativeName>
        <fullName>Complex III subunit 3</fullName>
    </alternativeName>
    <alternativeName>
        <fullName>Complex III subunit III</fullName>
    </alternativeName>
    <alternativeName>
        <fullName>Cytochrome b-c1 complex subunit 3</fullName>
    </alternativeName>
    <alternativeName>
        <fullName>Ubiquinol-cytochrome-c reductase complex cytochrome b subunit</fullName>
    </alternativeName>
</protein>
<reference key="1">
    <citation type="journal article" date="1989" name="Proc. Natl. Acad. Sci. U.S.A.">
        <title>Dynamics of mitochondrial DNA evolution in animals: amplification and sequencing with conserved primers.</title>
        <authorList>
            <person name="Kocher T.D."/>
            <person name="Thomas W.K."/>
            <person name="Meyer A."/>
            <person name="Edwards S.V."/>
            <person name="Paeaebo S."/>
            <person name="Villablanca F.X."/>
            <person name="Wilson A.C."/>
        </authorList>
    </citation>
    <scope>NUCLEOTIDE SEQUENCE [GENOMIC DNA]</scope>
</reference>